<keyword id="KW-0021">Allosteric enzyme</keyword>
<keyword id="KW-0328">Glycosyltransferase</keyword>
<keyword id="KW-0342">GTP-binding</keyword>
<keyword id="KW-0460">Magnesium</keyword>
<keyword id="KW-0547">Nucleotide-binding</keyword>
<keyword id="KW-1185">Reference proteome</keyword>
<keyword id="KW-0808">Transferase</keyword>
<name>UPP_POLNA</name>
<gene>
    <name evidence="1" type="primary">upp</name>
    <name type="ordered locus">Pnap_1726</name>
</gene>
<evidence type="ECO:0000255" key="1">
    <source>
        <dbReference type="HAMAP-Rule" id="MF_01218"/>
    </source>
</evidence>
<sequence length="209" mass="23123">MSNVHLISHPLVQHKLTLMRRKNASTSTFRTLLAELSNLMAYEVTRDMPLQDIEVETPLETTTGKIIDGKKLVLVSILRAGNGFLDGFLNVVPGARVGHIGLYRDPETLSPVEYYFKMPQEMQERDIVIVDPMLATGNSAIAAVDRLKQLKPRSIKFVCLLTCPEGVAALQKAHPDVDIYTAAIDRQLNEHGYILPGLGDAGDRIFGTK</sequence>
<comment type="function">
    <text evidence="1">Catalyzes the conversion of uracil and 5-phospho-alpha-D-ribose 1-diphosphate (PRPP) to UMP and diphosphate.</text>
</comment>
<comment type="catalytic activity">
    <reaction evidence="1">
        <text>UMP + diphosphate = 5-phospho-alpha-D-ribose 1-diphosphate + uracil</text>
        <dbReference type="Rhea" id="RHEA:13017"/>
        <dbReference type="ChEBI" id="CHEBI:17568"/>
        <dbReference type="ChEBI" id="CHEBI:33019"/>
        <dbReference type="ChEBI" id="CHEBI:57865"/>
        <dbReference type="ChEBI" id="CHEBI:58017"/>
        <dbReference type="EC" id="2.4.2.9"/>
    </reaction>
</comment>
<comment type="cofactor">
    <cofactor evidence="1">
        <name>Mg(2+)</name>
        <dbReference type="ChEBI" id="CHEBI:18420"/>
    </cofactor>
    <text evidence="1">Binds 1 Mg(2+) ion per subunit. The magnesium is bound as Mg-PRPP.</text>
</comment>
<comment type="activity regulation">
    <text evidence="1">Allosterically activated by GTP.</text>
</comment>
<comment type="pathway">
    <text evidence="1">Pyrimidine metabolism; UMP biosynthesis via salvage pathway; UMP from uracil: step 1/1.</text>
</comment>
<comment type="similarity">
    <text evidence="1">Belongs to the UPRTase family.</text>
</comment>
<reference key="1">
    <citation type="journal article" date="2009" name="Environ. Microbiol.">
        <title>The genome of Polaromonas naphthalenivorans strain CJ2, isolated from coal tar-contaminated sediment, reveals physiological and metabolic versatility and evolution through extensive horizontal gene transfer.</title>
        <authorList>
            <person name="Yagi J.M."/>
            <person name="Sims D."/>
            <person name="Brettin T."/>
            <person name="Bruce D."/>
            <person name="Madsen E.L."/>
        </authorList>
    </citation>
    <scope>NUCLEOTIDE SEQUENCE [LARGE SCALE GENOMIC DNA]</scope>
    <source>
        <strain>CJ2</strain>
    </source>
</reference>
<proteinExistence type="inferred from homology"/>
<organism>
    <name type="scientific">Polaromonas naphthalenivorans (strain CJ2)</name>
    <dbReference type="NCBI Taxonomy" id="365044"/>
    <lineage>
        <taxon>Bacteria</taxon>
        <taxon>Pseudomonadati</taxon>
        <taxon>Pseudomonadota</taxon>
        <taxon>Betaproteobacteria</taxon>
        <taxon>Burkholderiales</taxon>
        <taxon>Comamonadaceae</taxon>
        <taxon>Polaromonas</taxon>
    </lineage>
</organism>
<feature type="chain" id="PRO_1000053756" description="Uracil phosphoribosyltransferase">
    <location>
        <begin position="1"/>
        <end position="209"/>
    </location>
</feature>
<feature type="binding site" evidence="1">
    <location>
        <position position="79"/>
    </location>
    <ligand>
        <name>5-phospho-alpha-D-ribose 1-diphosphate</name>
        <dbReference type="ChEBI" id="CHEBI:58017"/>
    </ligand>
</feature>
<feature type="binding site" evidence="1">
    <location>
        <position position="104"/>
    </location>
    <ligand>
        <name>5-phospho-alpha-D-ribose 1-diphosphate</name>
        <dbReference type="ChEBI" id="CHEBI:58017"/>
    </ligand>
</feature>
<feature type="binding site" evidence="1">
    <location>
        <begin position="131"/>
        <end position="139"/>
    </location>
    <ligand>
        <name>5-phospho-alpha-D-ribose 1-diphosphate</name>
        <dbReference type="ChEBI" id="CHEBI:58017"/>
    </ligand>
</feature>
<feature type="binding site" evidence="1">
    <location>
        <position position="194"/>
    </location>
    <ligand>
        <name>uracil</name>
        <dbReference type="ChEBI" id="CHEBI:17568"/>
    </ligand>
</feature>
<feature type="binding site" evidence="1">
    <location>
        <begin position="199"/>
        <end position="201"/>
    </location>
    <ligand>
        <name>uracil</name>
        <dbReference type="ChEBI" id="CHEBI:17568"/>
    </ligand>
</feature>
<feature type="binding site" evidence="1">
    <location>
        <position position="200"/>
    </location>
    <ligand>
        <name>5-phospho-alpha-D-ribose 1-diphosphate</name>
        <dbReference type="ChEBI" id="CHEBI:58017"/>
    </ligand>
</feature>
<dbReference type="EC" id="2.4.2.9" evidence="1"/>
<dbReference type="EMBL" id="CP000529">
    <property type="protein sequence ID" value="ABM37039.1"/>
    <property type="molecule type" value="Genomic_DNA"/>
</dbReference>
<dbReference type="RefSeq" id="WP_011801125.1">
    <property type="nucleotide sequence ID" value="NC_008781.1"/>
</dbReference>
<dbReference type="SMR" id="A1VN11"/>
<dbReference type="STRING" id="365044.Pnap_1726"/>
<dbReference type="KEGG" id="pna:Pnap_1726"/>
<dbReference type="eggNOG" id="COG0035">
    <property type="taxonomic scope" value="Bacteria"/>
</dbReference>
<dbReference type="HOGENOM" id="CLU_067096_2_2_4"/>
<dbReference type="OrthoDB" id="9781675at2"/>
<dbReference type="UniPathway" id="UPA00574">
    <property type="reaction ID" value="UER00636"/>
</dbReference>
<dbReference type="Proteomes" id="UP000000644">
    <property type="component" value="Chromosome"/>
</dbReference>
<dbReference type="GO" id="GO:0005525">
    <property type="term" value="F:GTP binding"/>
    <property type="evidence" value="ECO:0007669"/>
    <property type="project" value="UniProtKB-KW"/>
</dbReference>
<dbReference type="GO" id="GO:0000287">
    <property type="term" value="F:magnesium ion binding"/>
    <property type="evidence" value="ECO:0007669"/>
    <property type="project" value="UniProtKB-UniRule"/>
</dbReference>
<dbReference type="GO" id="GO:0004845">
    <property type="term" value="F:uracil phosphoribosyltransferase activity"/>
    <property type="evidence" value="ECO:0007669"/>
    <property type="project" value="UniProtKB-UniRule"/>
</dbReference>
<dbReference type="GO" id="GO:0044206">
    <property type="term" value="P:UMP salvage"/>
    <property type="evidence" value="ECO:0007669"/>
    <property type="project" value="UniProtKB-UniRule"/>
</dbReference>
<dbReference type="GO" id="GO:0006223">
    <property type="term" value="P:uracil salvage"/>
    <property type="evidence" value="ECO:0007669"/>
    <property type="project" value="InterPro"/>
</dbReference>
<dbReference type="CDD" id="cd06223">
    <property type="entry name" value="PRTases_typeI"/>
    <property type="match status" value="1"/>
</dbReference>
<dbReference type="FunFam" id="3.40.50.2020:FF:000003">
    <property type="entry name" value="Uracil phosphoribosyltransferase"/>
    <property type="match status" value="1"/>
</dbReference>
<dbReference type="Gene3D" id="3.40.50.2020">
    <property type="match status" value="1"/>
</dbReference>
<dbReference type="HAMAP" id="MF_01218_B">
    <property type="entry name" value="Upp_B"/>
    <property type="match status" value="1"/>
</dbReference>
<dbReference type="InterPro" id="IPR000836">
    <property type="entry name" value="PRibTrfase_dom"/>
</dbReference>
<dbReference type="InterPro" id="IPR029057">
    <property type="entry name" value="PRTase-like"/>
</dbReference>
<dbReference type="InterPro" id="IPR034332">
    <property type="entry name" value="Upp_B"/>
</dbReference>
<dbReference type="InterPro" id="IPR050054">
    <property type="entry name" value="UPRTase/APRTase"/>
</dbReference>
<dbReference type="InterPro" id="IPR005765">
    <property type="entry name" value="Ura_phspho_trans"/>
</dbReference>
<dbReference type="NCBIfam" id="NF001097">
    <property type="entry name" value="PRK00129.1"/>
    <property type="match status" value="1"/>
</dbReference>
<dbReference type="NCBIfam" id="TIGR01091">
    <property type="entry name" value="upp"/>
    <property type="match status" value="1"/>
</dbReference>
<dbReference type="PANTHER" id="PTHR32315">
    <property type="entry name" value="ADENINE PHOSPHORIBOSYLTRANSFERASE"/>
    <property type="match status" value="1"/>
</dbReference>
<dbReference type="PANTHER" id="PTHR32315:SF4">
    <property type="entry name" value="URACIL PHOSPHORIBOSYLTRANSFERASE, CHLOROPLASTIC"/>
    <property type="match status" value="1"/>
</dbReference>
<dbReference type="Pfam" id="PF14681">
    <property type="entry name" value="UPRTase"/>
    <property type="match status" value="1"/>
</dbReference>
<dbReference type="SUPFAM" id="SSF53271">
    <property type="entry name" value="PRTase-like"/>
    <property type="match status" value="1"/>
</dbReference>
<protein>
    <recommendedName>
        <fullName evidence="1">Uracil phosphoribosyltransferase</fullName>
        <ecNumber evidence="1">2.4.2.9</ecNumber>
    </recommendedName>
    <alternativeName>
        <fullName evidence="1">UMP pyrophosphorylase</fullName>
    </alternativeName>
    <alternativeName>
        <fullName evidence="1">UPRTase</fullName>
    </alternativeName>
</protein>
<accession>A1VN11</accession>